<protein>
    <recommendedName>
        <fullName evidence="1">DNA double-strand break repair protein Mre11</fullName>
        <ecNumber evidence="1">3.1.-.-</ecNumber>
    </recommendedName>
</protein>
<name>MRE11_NANEQ</name>
<gene>
    <name evidence="1" type="primary">mre11</name>
    <name type="ordered locus">NEQ383</name>
</gene>
<reference key="1">
    <citation type="journal article" date="2003" name="Proc. Natl. Acad. Sci. U.S.A.">
        <title>The genome of Nanoarchaeum equitans: insights into early archaeal evolution and derived parasitism.</title>
        <authorList>
            <person name="Waters E."/>
            <person name="Hohn M.J."/>
            <person name="Ahel I."/>
            <person name="Graham D.E."/>
            <person name="Adams M.D."/>
            <person name="Barnstead M."/>
            <person name="Beeson K.Y."/>
            <person name="Bibbs L."/>
            <person name="Bolanos R."/>
            <person name="Keller M."/>
            <person name="Kretz K."/>
            <person name="Lin X."/>
            <person name="Mathur E."/>
            <person name="Ni J."/>
            <person name="Podar M."/>
            <person name="Richardson T."/>
            <person name="Sutton G.G."/>
            <person name="Simon M."/>
            <person name="Soell D."/>
            <person name="Stetter K.O."/>
            <person name="Short J.M."/>
            <person name="Noorderwier M."/>
        </authorList>
    </citation>
    <scope>NUCLEOTIDE SEQUENCE [LARGE SCALE GENOMIC DNA]</scope>
    <source>
        <strain>Kin4-M</strain>
    </source>
</reference>
<dbReference type="EC" id="3.1.-.-" evidence="1"/>
<dbReference type="EMBL" id="AE017199">
    <property type="protein sequence ID" value="AAR39230.1"/>
    <property type="molecule type" value="Genomic_DNA"/>
</dbReference>
<dbReference type="SMR" id="P62132"/>
<dbReference type="STRING" id="228908.NEQ383"/>
<dbReference type="EnsemblBacteria" id="AAR39230">
    <property type="protein sequence ID" value="AAR39230"/>
    <property type="gene ID" value="NEQ383"/>
</dbReference>
<dbReference type="KEGG" id="neq:NEQ383"/>
<dbReference type="HOGENOM" id="CLU_060534_0_0_2"/>
<dbReference type="Proteomes" id="UP000000578">
    <property type="component" value="Chromosome"/>
</dbReference>
<dbReference type="GO" id="GO:0004519">
    <property type="term" value="F:endonuclease activity"/>
    <property type="evidence" value="ECO:0007669"/>
    <property type="project" value="UniProtKB-KW"/>
</dbReference>
<dbReference type="GO" id="GO:0004527">
    <property type="term" value="F:exonuclease activity"/>
    <property type="evidence" value="ECO:0007669"/>
    <property type="project" value="UniProtKB-KW"/>
</dbReference>
<dbReference type="GO" id="GO:0046872">
    <property type="term" value="F:metal ion binding"/>
    <property type="evidence" value="ECO:0007669"/>
    <property type="project" value="UniProtKB-KW"/>
</dbReference>
<dbReference type="GO" id="GO:0006281">
    <property type="term" value="P:DNA repair"/>
    <property type="evidence" value="ECO:0007669"/>
    <property type="project" value="UniProtKB-KW"/>
</dbReference>
<dbReference type="Gene3D" id="3.60.21.10">
    <property type="match status" value="1"/>
</dbReference>
<dbReference type="InterPro" id="IPR004843">
    <property type="entry name" value="Calcineurin-like_PHP_ApaH"/>
</dbReference>
<dbReference type="InterPro" id="IPR050535">
    <property type="entry name" value="DNA_Repair-Maintenance_Comp"/>
</dbReference>
<dbReference type="InterPro" id="IPR029052">
    <property type="entry name" value="Metallo-depent_PP-like"/>
</dbReference>
<dbReference type="PANTHER" id="PTHR30337">
    <property type="entry name" value="COMPONENT OF ATP-DEPENDENT DSDNA EXONUCLEASE"/>
    <property type="match status" value="1"/>
</dbReference>
<dbReference type="Pfam" id="PF00149">
    <property type="entry name" value="Metallophos"/>
    <property type="match status" value="1"/>
</dbReference>
<dbReference type="SUPFAM" id="SSF56300">
    <property type="entry name" value="Metallo-dependent phosphatases"/>
    <property type="match status" value="1"/>
</dbReference>
<feature type="chain" id="PRO_0000138694" description="DNA double-strand break repair protein Mre11">
    <location>
        <begin position="1"/>
        <end position="361"/>
    </location>
</feature>
<feature type="active site" description="Proton donor" evidence="1">
    <location>
        <position position="84"/>
    </location>
</feature>
<feature type="binding site" evidence="1">
    <location>
        <position position="7"/>
    </location>
    <ligand>
        <name>Mn(2+)</name>
        <dbReference type="ChEBI" id="CHEBI:29035"/>
        <label>1</label>
    </ligand>
</feature>
<feature type="binding site" evidence="1">
    <location>
        <position position="9"/>
    </location>
    <ligand>
        <name>Mn(2+)</name>
        <dbReference type="ChEBI" id="CHEBI:29035"/>
        <label>1</label>
    </ligand>
</feature>
<feature type="binding site" evidence="1">
    <location>
        <position position="48"/>
    </location>
    <ligand>
        <name>Mn(2+)</name>
        <dbReference type="ChEBI" id="CHEBI:29035"/>
        <label>1</label>
    </ligand>
</feature>
<feature type="binding site" evidence="1">
    <location>
        <position position="48"/>
    </location>
    <ligand>
        <name>Mn(2+)</name>
        <dbReference type="ChEBI" id="CHEBI:29035"/>
        <label>2</label>
    </ligand>
</feature>
<feature type="binding site" evidence="1">
    <location>
        <position position="83"/>
    </location>
    <ligand>
        <name>Mn(2+)</name>
        <dbReference type="ChEBI" id="CHEBI:29035"/>
        <label>2</label>
    </ligand>
</feature>
<feature type="binding site" evidence="1">
    <location>
        <position position="176"/>
    </location>
    <ligand>
        <name>Mn(2+)</name>
        <dbReference type="ChEBI" id="CHEBI:29035"/>
        <label>2</label>
    </ligand>
</feature>
<feature type="binding site" evidence="1">
    <location>
        <position position="204"/>
    </location>
    <ligand>
        <name>Mn(2+)</name>
        <dbReference type="ChEBI" id="CHEBI:29035"/>
        <label>2</label>
    </ligand>
</feature>
<feature type="binding site" evidence="1">
    <location>
        <position position="206"/>
    </location>
    <ligand>
        <name>Mn(2+)</name>
        <dbReference type="ChEBI" id="CHEBI:29035"/>
        <label>1</label>
    </ligand>
</feature>
<sequence length="361" mass="42565">MIAFISDLHLGNIYANKKETEEHSYNALAKIEEKLLEYQPDLVLVGGDIFDKNKVSGKEIGVFIDFINKMNKNNIGVVSISGNHDGKYWLKESFDHAIPYILYKSGINPENGYEYYSFAGIYLKNSRDWKTLSMIEDKYDISIVGFSFYTKDRLPELYEYLSIIDREKSDYILLMHQSLKSLLPQDPAAIDLTIENYKYALFGHMHMKYYKDKIIVTPPPYSISLKEANTEKGFWLIDKKPVFVPIEDSRPFIKMAIDLDNPIEIKPNKNAILILDVYYRESQIDKLNLLKKTLSENFLYVKINPILKETSKIIVKKSENKEEIFKKYLKEDYDFFMELYEKFRDIKDPETIVQYLEFFYR</sequence>
<keyword id="KW-0227">DNA damage</keyword>
<keyword id="KW-0234">DNA repair</keyword>
<keyword id="KW-0255">Endonuclease</keyword>
<keyword id="KW-0269">Exonuclease</keyword>
<keyword id="KW-0378">Hydrolase</keyword>
<keyword id="KW-0464">Manganese</keyword>
<keyword id="KW-0479">Metal-binding</keyword>
<keyword id="KW-0540">Nuclease</keyword>
<keyword id="KW-1185">Reference proteome</keyword>
<organism>
    <name type="scientific">Nanoarchaeum equitans (strain Kin4-M)</name>
    <dbReference type="NCBI Taxonomy" id="228908"/>
    <lineage>
        <taxon>Archaea</taxon>
        <taxon>Nanobdellota</taxon>
        <taxon>Candidatus Nanoarchaeia</taxon>
        <taxon>Nanoarchaeales</taxon>
        <taxon>Nanoarchaeaceae</taxon>
        <taxon>Nanoarchaeum</taxon>
    </lineage>
</organism>
<accession>P62132</accession>
<evidence type="ECO:0000250" key="1">
    <source>
        <dbReference type="UniProtKB" id="Q8U1N9"/>
    </source>
</evidence>
<evidence type="ECO:0000305" key="2"/>
<comment type="function">
    <text evidence="1">Part of the Rad50/Mre11 complex, which is involved in the early steps of DNA double-strand break (DSB) repair. The complex may facilitate opening of the processed DNA ends to aid in the recruitment of HerA and NurA. Mre11 binds to DSB ends and has both double-stranded 3'-5' exonuclease activity and single-stranded endonuclease activity.</text>
</comment>
<comment type="cofactor">
    <cofactor evidence="1">
        <name>Mn(2+)</name>
        <dbReference type="ChEBI" id="CHEBI:29035"/>
    </cofactor>
    <text evidence="1">Binds 2 manganese ions per subunit.</text>
</comment>
<comment type="activity regulation">
    <text evidence="1">Nuclease activity is regulated by Rad50.</text>
</comment>
<comment type="subunit">
    <text evidence="1">Homodimer. Forms a heterotetramer composed of two Mre11 subunits and two Rad50 subunits.</text>
</comment>
<comment type="similarity">
    <text evidence="2">Belongs to the MRE11/RAD32 family.</text>
</comment>
<proteinExistence type="inferred from homology"/>